<organism>
    <name type="scientific">Prochlorococcus marinus (strain MIT 9312)</name>
    <dbReference type="NCBI Taxonomy" id="74546"/>
    <lineage>
        <taxon>Bacteria</taxon>
        <taxon>Bacillati</taxon>
        <taxon>Cyanobacteriota</taxon>
        <taxon>Cyanophyceae</taxon>
        <taxon>Synechococcales</taxon>
        <taxon>Prochlorococcaceae</taxon>
        <taxon>Prochlorococcus</taxon>
    </lineage>
</organism>
<gene>
    <name evidence="1" type="primary">guaA</name>
    <name type="ordered locus">PMT9312_0037</name>
</gene>
<protein>
    <recommendedName>
        <fullName evidence="1">GMP synthase [glutamine-hydrolyzing]</fullName>
        <ecNumber evidence="1">6.3.5.2</ecNumber>
    </recommendedName>
    <alternativeName>
        <fullName evidence="1">GMP synthetase</fullName>
    </alternativeName>
    <alternativeName>
        <fullName evidence="1">Glutamine amidotransferase</fullName>
    </alternativeName>
</protein>
<comment type="function">
    <text evidence="1">Catalyzes the synthesis of GMP from XMP.</text>
</comment>
<comment type="catalytic activity">
    <reaction evidence="1">
        <text>XMP + L-glutamine + ATP + H2O = GMP + L-glutamate + AMP + diphosphate + 2 H(+)</text>
        <dbReference type="Rhea" id="RHEA:11680"/>
        <dbReference type="ChEBI" id="CHEBI:15377"/>
        <dbReference type="ChEBI" id="CHEBI:15378"/>
        <dbReference type="ChEBI" id="CHEBI:29985"/>
        <dbReference type="ChEBI" id="CHEBI:30616"/>
        <dbReference type="ChEBI" id="CHEBI:33019"/>
        <dbReference type="ChEBI" id="CHEBI:57464"/>
        <dbReference type="ChEBI" id="CHEBI:58115"/>
        <dbReference type="ChEBI" id="CHEBI:58359"/>
        <dbReference type="ChEBI" id="CHEBI:456215"/>
        <dbReference type="EC" id="6.3.5.2"/>
    </reaction>
</comment>
<comment type="pathway">
    <text evidence="1">Purine metabolism; GMP biosynthesis; GMP from XMP (L-Gln route): step 1/1.</text>
</comment>
<comment type="subunit">
    <text evidence="1">Homodimer.</text>
</comment>
<dbReference type="EC" id="6.3.5.2" evidence="1"/>
<dbReference type="EMBL" id="CP000111">
    <property type="protein sequence ID" value="ABB49098.1"/>
    <property type="molecule type" value="Genomic_DNA"/>
</dbReference>
<dbReference type="RefSeq" id="WP_011375602.1">
    <property type="nucleotide sequence ID" value="NC_007577.1"/>
</dbReference>
<dbReference type="SMR" id="Q31DE7"/>
<dbReference type="STRING" id="74546.PMT9312_0037"/>
<dbReference type="KEGG" id="pmi:PMT9312_0037"/>
<dbReference type="eggNOG" id="COG0519">
    <property type="taxonomic scope" value="Bacteria"/>
</dbReference>
<dbReference type="HOGENOM" id="CLU_014340_0_5_3"/>
<dbReference type="OrthoDB" id="9802219at2"/>
<dbReference type="UniPathway" id="UPA00189">
    <property type="reaction ID" value="UER00296"/>
</dbReference>
<dbReference type="Proteomes" id="UP000002715">
    <property type="component" value="Chromosome"/>
</dbReference>
<dbReference type="GO" id="GO:0005829">
    <property type="term" value="C:cytosol"/>
    <property type="evidence" value="ECO:0007669"/>
    <property type="project" value="TreeGrafter"/>
</dbReference>
<dbReference type="GO" id="GO:0005524">
    <property type="term" value="F:ATP binding"/>
    <property type="evidence" value="ECO:0007669"/>
    <property type="project" value="UniProtKB-UniRule"/>
</dbReference>
<dbReference type="GO" id="GO:0003921">
    <property type="term" value="F:GMP synthase activity"/>
    <property type="evidence" value="ECO:0007669"/>
    <property type="project" value="InterPro"/>
</dbReference>
<dbReference type="CDD" id="cd01742">
    <property type="entry name" value="GATase1_GMP_Synthase"/>
    <property type="match status" value="1"/>
</dbReference>
<dbReference type="CDD" id="cd01997">
    <property type="entry name" value="GMP_synthase_C"/>
    <property type="match status" value="1"/>
</dbReference>
<dbReference type="FunFam" id="3.30.300.10:FF:000002">
    <property type="entry name" value="GMP synthase [glutamine-hydrolyzing]"/>
    <property type="match status" value="1"/>
</dbReference>
<dbReference type="FunFam" id="3.40.50.620:FF:000001">
    <property type="entry name" value="GMP synthase [glutamine-hydrolyzing]"/>
    <property type="match status" value="1"/>
</dbReference>
<dbReference type="FunFam" id="3.40.50.880:FF:000001">
    <property type="entry name" value="GMP synthase [glutamine-hydrolyzing]"/>
    <property type="match status" value="1"/>
</dbReference>
<dbReference type="Gene3D" id="3.30.300.10">
    <property type="match status" value="1"/>
</dbReference>
<dbReference type="Gene3D" id="3.40.50.880">
    <property type="match status" value="1"/>
</dbReference>
<dbReference type="Gene3D" id="3.40.50.620">
    <property type="entry name" value="HUPs"/>
    <property type="match status" value="1"/>
</dbReference>
<dbReference type="HAMAP" id="MF_00344">
    <property type="entry name" value="GMP_synthase"/>
    <property type="match status" value="1"/>
</dbReference>
<dbReference type="InterPro" id="IPR029062">
    <property type="entry name" value="Class_I_gatase-like"/>
</dbReference>
<dbReference type="InterPro" id="IPR017926">
    <property type="entry name" value="GATASE"/>
</dbReference>
<dbReference type="InterPro" id="IPR001674">
    <property type="entry name" value="GMP_synth_C"/>
</dbReference>
<dbReference type="InterPro" id="IPR004739">
    <property type="entry name" value="GMP_synth_GATase"/>
</dbReference>
<dbReference type="InterPro" id="IPR022955">
    <property type="entry name" value="GMP_synthase"/>
</dbReference>
<dbReference type="InterPro" id="IPR025777">
    <property type="entry name" value="GMPS_ATP_PPase_dom"/>
</dbReference>
<dbReference type="InterPro" id="IPR014729">
    <property type="entry name" value="Rossmann-like_a/b/a_fold"/>
</dbReference>
<dbReference type="NCBIfam" id="TIGR00884">
    <property type="entry name" value="guaA_Cterm"/>
    <property type="match status" value="1"/>
</dbReference>
<dbReference type="NCBIfam" id="TIGR00888">
    <property type="entry name" value="guaA_Nterm"/>
    <property type="match status" value="1"/>
</dbReference>
<dbReference type="NCBIfam" id="NF000848">
    <property type="entry name" value="PRK00074.1"/>
    <property type="match status" value="1"/>
</dbReference>
<dbReference type="PANTHER" id="PTHR11922:SF2">
    <property type="entry name" value="GMP SYNTHASE [GLUTAMINE-HYDROLYZING]"/>
    <property type="match status" value="1"/>
</dbReference>
<dbReference type="PANTHER" id="PTHR11922">
    <property type="entry name" value="GMP SYNTHASE-RELATED"/>
    <property type="match status" value="1"/>
</dbReference>
<dbReference type="Pfam" id="PF00117">
    <property type="entry name" value="GATase"/>
    <property type="match status" value="1"/>
</dbReference>
<dbReference type="Pfam" id="PF00958">
    <property type="entry name" value="GMP_synt_C"/>
    <property type="match status" value="1"/>
</dbReference>
<dbReference type="PRINTS" id="PR00097">
    <property type="entry name" value="ANTSNTHASEII"/>
</dbReference>
<dbReference type="PRINTS" id="PR00099">
    <property type="entry name" value="CPSGATASE"/>
</dbReference>
<dbReference type="PRINTS" id="PR00096">
    <property type="entry name" value="GATASE"/>
</dbReference>
<dbReference type="SUPFAM" id="SSF52402">
    <property type="entry name" value="Adenine nucleotide alpha hydrolases-like"/>
    <property type="match status" value="1"/>
</dbReference>
<dbReference type="SUPFAM" id="SSF52317">
    <property type="entry name" value="Class I glutamine amidotransferase-like"/>
    <property type="match status" value="1"/>
</dbReference>
<dbReference type="SUPFAM" id="SSF54810">
    <property type="entry name" value="GMP synthetase C-terminal dimerisation domain"/>
    <property type="match status" value="1"/>
</dbReference>
<dbReference type="PROSITE" id="PS51273">
    <property type="entry name" value="GATASE_TYPE_1"/>
    <property type="match status" value="1"/>
</dbReference>
<dbReference type="PROSITE" id="PS51553">
    <property type="entry name" value="GMPS_ATP_PPASE"/>
    <property type="match status" value="1"/>
</dbReference>
<accession>Q31DE7</accession>
<proteinExistence type="inferred from homology"/>
<keyword id="KW-0067">ATP-binding</keyword>
<keyword id="KW-0315">Glutamine amidotransferase</keyword>
<keyword id="KW-0332">GMP biosynthesis</keyword>
<keyword id="KW-0436">Ligase</keyword>
<keyword id="KW-0547">Nucleotide-binding</keyword>
<keyword id="KW-0658">Purine biosynthesis</keyword>
<sequence length="528" mass="59362">MSQTSLKKERDPSILILDFGSQYSELIARRIRETNVFSLVVSNCISIEEINDINPKGIILSGGPNSVYEKNAPKCDEKIFNLGIPILGICYGMQLMVKELGGSVTSATKKAEYGRAPINIDQESELLSDVEDKSIMWMSHGDSINCLPDGFNKIAHTENTLHAAISNDRKKLFGVQFHPEVIHSEFGITVIKNFVYGISSCVADWTTETYIEETIPRIRDQVGNKKVLLALSGGVDSSTLAFLLNKAIGNQLTCMFIDQGFMRKGEPEFLMNFFDKKFHIKVEYINARERFISKLKGITDPEQKRKIIGEEFIRVFEEESNRLGPFQYLAQGTLYPDVIESAGTNIDPKTGERIAVKIKSHHNVGGLPKDLQFKLVEPLRKLFKDEVRKLGAALGLPDEIIKRHPFPGPGLAIRILGEVNNEKLDCLRDADWIVRDEIKKAGLYNDIWQAFAVLLPVKTVGVMGDKRTYAWPIVLRCVSSEDGMTADWSKIPFPILERISNRIVNEVVSVNRVVYDITSKPPGTIEWE</sequence>
<evidence type="ECO:0000255" key="1">
    <source>
        <dbReference type="HAMAP-Rule" id="MF_00344"/>
    </source>
</evidence>
<feature type="chain" id="PRO_0000229453" description="GMP synthase [glutamine-hydrolyzing]">
    <location>
        <begin position="1"/>
        <end position="528"/>
    </location>
</feature>
<feature type="domain" description="Glutamine amidotransferase type-1" evidence="1">
    <location>
        <begin position="13"/>
        <end position="204"/>
    </location>
</feature>
<feature type="domain" description="GMPS ATP-PPase" evidence="1">
    <location>
        <begin position="205"/>
        <end position="403"/>
    </location>
</feature>
<feature type="active site" description="Nucleophile" evidence="1">
    <location>
        <position position="90"/>
    </location>
</feature>
<feature type="active site" evidence="1">
    <location>
        <position position="178"/>
    </location>
</feature>
<feature type="active site" evidence="1">
    <location>
        <position position="180"/>
    </location>
</feature>
<feature type="binding site" evidence="1">
    <location>
        <begin position="232"/>
        <end position="238"/>
    </location>
    <ligand>
        <name>ATP</name>
        <dbReference type="ChEBI" id="CHEBI:30616"/>
    </ligand>
</feature>
<name>GUAA_PROM9</name>
<reference key="1">
    <citation type="journal article" date="2006" name="Science">
        <title>Genomic islands and the ecology and evolution of Prochlorococcus.</title>
        <authorList>
            <person name="Coleman M.L."/>
            <person name="Sullivan M.B."/>
            <person name="Martiny A.C."/>
            <person name="Steglich C."/>
            <person name="Barry K."/>
            <person name="Delong E.F."/>
            <person name="Chisholm S.W."/>
        </authorList>
    </citation>
    <scope>NUCLEOTIDE SEQUENCE [LARGE SCALE GENOMIC DNA]</scope>
    <source>
        <strain>MIT 9312</strain>
    </source>
</reference>